<name>RTC5_FUSV7</name>
<protein>
    <recommendedName>
        <fullName>Restriction of telomere capping protein 5</fullName>
    </recommendedName>
</protein>
<feature type="chain" id="PRO_0000408831" description="Restriction of telomere capping protein 5">
    <location>
        <begin position="1"/>
        <end position="607"/>
    </location>
</feature>
<feature type="domain" description="TLDc" evidence="2">
    <location>
        <begin position="333"/>
        <end position="552"/>
    </location>
</feature>
<comment type="function">
    <text evidence="1">May be involved in a process influencing telomere capping.</text>
</comment>
<comment type="subcellular location">
    <subcellularLocation>
        <location evidence="1">Cytoplasm</location>
    </subcellularLocation>
</comment>
<comment type="similarity">
    <text evidence="3">Belongs to the RTC5 family.</text>
</comment>
<keyword id="KW-0963">Cytoplasm</keyword>
<keyword id="KW-1185">Reference proteome</keyword>
<dbReference type="EMBL" id="GG698896">
    <property type="protein sequence ID" value="EEU48896.1"/>
    <property type="molecule type" value="Genomic_DNA"/>
</dbReference>
<dbReference type="RefSeq" id="XP_003054609.1">
    <property type="nucleotide sequence ID" value="XM_003054563.1"/>
</dbReference>
<dbReference type="SMR" id="C7YJ03"/>
<dbReference type="FunCoup" id="C7YJ03">
    <property type="interactions" value="8"/>
</dbReference>
<dbReference type="STRING" id="660122.C7YJ03"/>
<dbReference type="EnsemblFungi" id="NechaT75507">
    <property type="protein sequence ID" value="NechaP75507"/>
    <property type="gene ID" value="NechaG75507"/>
</dbReference>
<dbReference type="GeneID" id="9663680"/>
<dbReference type="KEGG" id="nhe:NECHADRAFT_75507"/>
<dbReference type="VEuPathDB" id="FungiDB:NECHADRAFT_75507"/>
<dbReference type="eggNOG" id="ENOG502QV3R">
    <property type="taxonomic scope" value="Eukaryota"/>
</dbReference>
<dbReference type="HOGENOM" id="CLU_011918_1_0_1"/>
<dbReference type="InParanoid" id="C7YJ03"/>
<dbReference type="OMA" id="KWEFEAR"/>
<dbReference type="OrthoDB" id="289228at2759"/>
<dbReference type="Proteomes" id="UP000005206">
    <property type="component" value="Unassembled WGS sequence"/>
</dbReference>
<dbReference type="GO" id="GO:0005737">
    <property type="term" value="C:cytoplasm"/>
    <property type="evidence" value="ECO:0007669"/>
    <property type="project" value="UniProtKB-SubCell"/>
</dbReference>
<dbReference type="GO" id="GO:0005634">
    <property type="term" value="C:nucleus"/>
    <property type="evidence" value="ECO:0007669"/>
    <property type="project" value="TreeGrafter"/>
</dbReference>
<dbReference type="GO" id="GO:0006979">
    <property type="term" value="P:response to oxidative stress"/>
    <property type="evidence" value="ECO:0007669"/>
    <property type="project" value="TreeGrafter"/>
</dbReference>
<dbReference type="InterPro" id="IPR006571">
    <property type="entry name" value="TLDc_dom"/>
</dbReference>
<dbReference type="PANTHER" id="PTHR23354">
    <property type="entry name" value="NUCLEOLAR PROTEIN 7/ESTROGEN RECEPTOR COACTIVATOR-RELATED"/>
    <property type="match status" value="1"/>
</dbReference>
<dbReference type="PANTHER" id="PTHR23354:SF130">
    <property type="entry name" value="RESTRICTION OF TELOMERE CAPPING PROTEIN 5"/>
    <property type="match status" value="1"/>
</dbReference>
<dbReference type="Pfam" id="PF07534">
    <property type="entry name" value="TLD"/>
    <property type="match status" value="1"/>
</dbReference>
<dbReference type="SMART" id="SM00584">
    <property type="entry name" value="TLDc"/>
    <property type="match status" value="1"/>
</dbReference>
<dbReference type="PROSITE" id="PS51886">
    <property type="entry name" value="TLDC"/>
    <property type="match status" value="1"/>
</dbReference>
<proteinExistence type="inferred from homology"/>
<accession>C7YJ03</accession>
<organism>
    <name type="scientific">Fusarium vanettenii (strain ATCC MYA-4622 / CBS 123669 / FGSC 9596 / NRRL 45880 / 77-13-4)</name>
    <name type="common">Fusarium solani subsp. pisi</name>
    <dbReference type="NCBI Taxonomy" id="660122"/>
    <lineage>
        <taxon>Eukaryota</taxon>
        <taxon>Fungi</taxon>
        <taxon>Dikarya</taxon>
        <taxon>Ascomycota</taxon>
        <taxon>Pezizomycotina</taxon>
        <taxon>Sordariomycetes</taxon>
        <taxon>Hypocreomycetidae</taxon>
        <taxon>Hypocreales</taxon>
        <taxon>Nectriaceae</taxon>
        <taxon>Fusarium</taxon>
        <taxon>Fusarium solani species complex</taxon>
        <taxon>Fusarium vanettenii</taxon>
    </lineage>
</organism>
<gene>
    <name type="primary">RTC5</name>
    <name type="ORF">NECHADRAFT_75507</name>
</gene>
<evidence type="ECO:0000250" key="1"/>
<evidence type="ECO:0000255" key="2">
    <source>
        <dbReference type="PROSITE-ProRule" id="PRU01234"/>
    </source>
</evidence>
<evidence type="ECO:0000305" key="3"/>
<reference key="1">
    <citation type="journal article" date="2009" name="PLoS Genet.">
        <title>The genome of Nectria haematococca: contribution of supernumerary chromosomes to gene expansion.</title>
        <authorList>
            <person name="Coleman J.J."/>
            <person name="Rounsley S.D."/>
            <person name="Rodriguez-Carres M."/>
            <person name="Kuo A."/>
            <person name="Wasmann C.C."/>
            <person name="Grimwood J."/>
            <person name="Schmutz J."/>
            <person name="Taga M."/>
            <person name="White G.J."/>
            <person name="Zhou S."/>
            <person name="Schwartz D.C."/>
            <person name="Freitag M."/>
            <person name="Ma L.-J."/>
            <person name="Danchin E.G.J."/>
            <person name="Henrissat B."/>
            <person name="Coutinho P.M."/>
            <person name="Nelson D.R."/>
            <person name="Straney D."/>
            <person name="Napoli C.A."/>
            <person name="Barker B.M."/>
            <person name="Gribskov M."/>
            <person name="Rep M."/>
            <person name="Kroken S."/>
            <person name="Molnar I."/>
            <person name="Rensing C."/>
            <person name="Kennell J.C."/>
            <person name="Zamora J."/>
            <person name="Farman M.L."/>
            <person name="Selker E.U."/>
            <person name="Salamov A."/>
            <person name="Shapiro H."/>
            <person name="Pangilinan J."/>
            <person name="Lindquist E."/>
            <person name="Lamers C."/>
            <person name="Grigoriev I.V."/>
            <person name="Geiser D.M."/>
            <person name="Covert S.F."/>
            <person name="Temporini E."/>
            <person name="VanEtten H.D."/>
        </authorList>
    </citation>
    <scope>NUCLEOTIDE SEQUENCE [LARGE SCALE GENOMIC DNA]</scope>
    <source>
        <strain>ATCC MYA-4622 / CBS 123669 / FGSC 9596 / NRRL 45880 / 77-13-4</strain>
    </source>
</reference>
<sequence>MGQNLSDEQPQRRSHEELTHELAERFRSKCFTSLEFYSLKDVFKSLADQQDSIRYMKEDTIARYLEIPDILGASPVIFQMVSYLGAFPFLQDAPVVLELPRMIMVIVIMTERYRTVLARGSADRTKLLFRSLAVFDRKPSESDALIPDAAQLDEPNGKDEKVQENSHVAGFAVDQAGDEVDDDDDEDDDLVLTAFELLDVKEAVDQGHAPKFHSATIPTDNFRKLLMLLLLAAPLDPQESLSLYSPHVVGEQLEGLRATAECILASFVNAETSTGIKYSHFKSIIPVICPNLFRGFNGLFEHFLFSKNLDFSKHQNDIPITKVAQPLLTDSGEILNHNTLCQISLFLPGSDLFRRVRLLYSGNDAGFSMGSFQTKVFNWQAPTLLLVSGTRLSDIPEGGQEVAFAASLPTKRFPHGSKSDQLTFGVYVREPWKHTHRECFGDADTVLFQLEPIHDVFPASTINKDYVTFTKAPAHHPMLSFGCPHPHPSQAHRKADMLHLGPVSLTLDDSFEFAVFNHDFTSRGGAFRSSSVRKFDFQERFQIESLEVWGCGGDAEARAQAERWAWEEREAEARRKINLGTGDIEADRALLEMAGLIGGARSGGSMG</sequence>